<gene>
    <name type="primary">Uqcrc1</name>
</gene>
<evidence type="ECO:0000250" key="1"/>
<evidence type="ECO:0000250" key="2">
    <source>
        <dbReference type="UniProtKB" id="P07256"/>
    </source>
</evidence>
<evidence type="ECO:0000250" key="3">
    <source>
        <dbReference type="UniProtKB" id="P31800"/>
    </source>
</evidence>
<evidence type="ECO:0000250" key="4">
    <source>
        <dbReference type="UniProtKB" id="P31930"/>
    </source>
</evidence>
<evidence type="ECO:0000250" key="5">
    <source>
        <dbReference type="UniProtKB" id="Q9CZ13"/>
    </source>
</evidence>
<evidence type="ECO:0000305" key="6"/>
<evidence type="ECO:0007744" key="7">
    <source>
    </source>
</evidence>
<proteinExistence type="evidence at protein level"/>
<name>QCR1_RAT</name>
<keyword id="KW-0007">Acetylation</keyword>
<keyword id="KW-0903">Direct protein sequencing</keyword>
<keyword id="KW-0249">Electron transport</keyword>
<keyword id="KW-0472">Membrane</keyword>
<keyword id="KW-0496">Mitochondrion</keyword>
<keyword id="KW-0999">Mitochondrion inner membrane</keyword>
<keyword id="KW-0597">Phosphoprotein</keyword>
<keyword id="KW-1185">Reference proteome</keyword>
<keyword id="KW-0679">Respiratory chain</keyword>
<keyword id="KW-0809">Transit peptide</keyword>
<keyword id="KW-0813">Transport</keyword>
<reference key="1">
    <citation type="journal article" date="2004" name="Genome Res.">
        <title>The status, quality, and expansion of the NIH full-length cDNA project: the Mammalian Gene Collection (MGC).</title>
        <authorList>
            <consortium name="The MGC Project Team"/>
        </authorList>
    </citation>
    <scope>NUCLEOTIDE SEQUENCE [LARGE SCALE MRNA]</scope>
    <source>
        <tissue>Kidney</tissue>
    </source>
</reference>
<reference key="2">
    <citation type="submission" date="2007-04" db="UniProtKB">
        <authorList>
            <person name="Lubec G."/>
            <person name="Afjehi-Sadat L."/>
            <person name="Chen W.-Q."/>
        </authorList>
    </citation>
    <scope>PROTEIN SEQUENCE OF 86-99; 112-126 AND 397-415</scope>
    <scope>IDENTIFICATION BY MASS SPECTROMETRY</scope>
    <source>
        <strain>Sprague-Dawley</strain>
        <tissue>Hippocampus</tissue>
        <tissue>Spinal cord</tissue>
    </source>
</reference>
<reference key="3">
    <citation type="journal article" date="2012" name="Nat. Commun.">
        <title>Quantitative maps of protein phosphorylation sites across 14 different rat organs and tissues.</title>
        <authorList>
            <person name="Lundby A."/>
            <person name="Secher A."/>
            <person name="Lage K."/>
            <person name="Nordsborg N.B."/>
            <person name="Dmytriyev A."/>
            <person name="Lundby C."/>
            <person name="Olsen J.V."/>
        </authorList>
    </citation>
    <scope>PHOSPHORYLATION [LARGE SCALE ANALYSIS] AT SER-212 AND THR-214</scope>
    <scope>IDENTIFICATION BY MASS SPECTROMETRY [LARGE SCALE ANALYSIS]</scope>
</reference>
<organism>
    <name type="scientific">Rattus norvegicus</name>
    <name type="common">Rat</name>
    <dbReference type="NCBI Taxonomy" id="10116"/>
    <lineage>
        <taxon>Eukaryota</taxon>
        <taxon>Metazoa</taxon>
        <taxon>Chordata</taxon>
        <taxon>Craniata</taxon>
        <taxon>Vertebrata</taxon>
        <taxon>Euteleostomi</taxon>
        <taxon>Mammalia</taxon>
        <taxon>Eutheria</taxon>
        <taxon>Euarchontoglires</taxon>
        <taxon>Glires</taxon>
        <taxon>Rodentia</taxon>
        <taxon>Myomorpha</taxon>
        <taxon>Muroidea</taxon>
        <taxon>Muridae</taxon>
        <taxon>Murinae</taxon>
        <taxon>Rattus</taxon>
    </lineage>
</organism>
<sequence length="480" mass="52849">MAASAVCRAACSGTQALLRTCRSPALLRLPALRGTATFVQALQSVPETQVSVLDNGLRVASEQSSHPTCTVGVWIDVGSRYETEKNNGAGYFLEHLAFKGTKNRPGNALEKEVESIGAHLNAYSTREHTAYLIKALSKDLPKVVELLADIVQNISLEDSQIEKERDVILREMQENDASMQNVVFDYLHATAFQGTPLAQAVEGPSENVRRLSRTDLTDYLSRHYKAPRMVLAAAGGVKHQQLLDLAQDHFSSVSQVYEEDAVPSITPCRFTGSEIRHRDDALPLAHVAIAVEGPGWANPDNVALQVANAIIGHYDCTYGGGVHLSSPLASVAVANKLCQSFQTFNISYSETGLLGAHFVCDAMSIDDMIFFLQGQWMRLCTSATESEVTRGKNILRNALISHLDGTTPVCEDIGRSLLTYGRRIPLAEWESRIEEVDAQMVREVCSKYFYDQCPAVAGYGPIEQLSDYNRIRSGMFWLRF</sequence>
<accession>Q68FY0</accession>
<protein>
    <recommendedName>
        <fullName>Cytochrome b-c1 complex subunit 1, mitochondrial</fullName>
    </recommendedName>
    <alternativeName>
        <fullName>Complex III subunit 1</fullName>
    </alternativeName>
    <alternativeName>
        <fullName>Core protein I</fullName>
    </alternativeName>
    <alternativeName>
        <fullName>Ubiquinol-cytochrome-c reductase complex core protein 1</fullName>
    </alternativeName>
</protein>
<dbReference type="EMBL" id="BC078923">
    <property type="protein sequence ID" value="AAH78923.1"/>
    <property type="molecule type" value="mRNA"/>
</dbReference>
<dbReference type="RefSeq" id="NP_001004250.1">
    <property type="nucleotide sequence ID" value="NM_001004250.2"/>
</dbReference>
<dbReference type="SMR" id="Q68FY0"/>
<dbReference type="BioGRID" id="256797">
    <property type="interactions" value="2"/>
</dbReference>
<dbReference type="CORUM" id="Q68FY0"/>
<dbReference type="FunCoup" id="Q68FY0">
    <property type="interactions" value="2016"/>
</dbReference>
<dbReference type="IntAct" id="Q68FY0">
    <property type="interactions" value="3"/>
</dbReference>
<dbReference type="MINT" id="Q68FY0"/>
<dbReference type="STRING" id="10116.ENSRNOP00000044696"/>
<dbReference type="MEROPS" id="M16.975"/>
<dbReference type="CarbonylDB" id="Q68FY0"/>
<dbReference type="GlyGen" id="Q68FY0">
    <property type="glycosylation" value="4 sites, 1 O-linked glycan (4 sites)"/>
</dbReference>
<dbReference type="iPTMnet" id="Q68FY0"/>
<dbReference type="PhosphoSitePlus" id="Q68FY0"/>
<dbReference type="jPOST" id="Q68FY0"/>
<dbReference type="PaxDb" id="10116-ENSRNOP00000044696"/>
<dbReference type="Ensembl" id="ENSRNOT00000042114.5">
    <property type="protein sequence ID" value="ENSRNOP00000044696.2"/>
    <property type="gene ID" value="ENSRNOG00000032134.5"/>
</dbReference>
<dbReference type="GeneID" id="301011"/>
<dbReference type="KEGG" id="rno:301011"/>
<dbReference type="UCSC" id="RGD:1303314">
    <property type="organism name" value="rat"/>
</dbReference>
<dbReference type="AGR" id="RGD:1303314"/>
<dbReference type="CTD" id="7384"/>
<dbReference type="RGD" id="1303314">
    <property type="gene designation" value="Uqcrc1"/>
</dbReference>
<dbReference type="eggNOG" id="KOG0960">
    <property type="taxonomic scope" value="Eukaryota"/>
</dbReference>
<dbReference type="GeneTree" id="ENSGT00940000158931"/>
<dbReference type="HOGENOM" id="CLU_009902_4_0_1"/>
<dbReference type="InParanoid" id="Q68FY0"/>
<dbReference type="OMA" id="HFAQGEW"/>
<dbReference type="OrthoDB" id="10251424at2759"/>
<dbReference type="PhylomeDB" id="Q68FY0"/>
<dbReference type="TreeFam" id="TF105032"/>
<dbReference type="Reactome" id="R-RNO-611105">
    <property type="pathway name" value="Respiratory electron transport"/>
</dbReference>
<dbReference type="Reactome" id="R-RNO-9865881">
    <property type="pathway name" value="Complex III assembly"/>
</dbReference>
<dbReference type="PRO" id="PR:Q68FY0"/>
<dbReference type="Proteomes" id="UP000002494">
    <property type="component" value="Chromosome 8"/>
</dbReference>
<dbReference type="Bgee" id="ENSRNOG00000032134">
    <property type="expression patterns" value="Expressed in heart and 19 other cell types or tissues"/>
</dbReference>
<dbReference type="GO" id="GO:0005743">
    <property type="term" value="C:mitochondrial inner membrane"/>
    <property type="evidence" value="ECO:0000266"/>
    <property type="project" value="RGD"/>
</dbReference>
<dbReference type="GO" id="GO:0005739">
    <property type="term" value="C:mitochondrion"/>
    <property type="evidence" value="ECO:0000266"/>
    <property type="project" value="RGD"/>
</dbReference>
<dbReference type="GO" id="GO:0045275">
    <property type="term" value="C:respiratory chain complex III"/>
    <property type="evidence" value="ECO:0000314"/>
    <property type="project" value="RGD"/>
</dbReference>
<dbReference type="GO" id="GO:0046872">
    <property type="term" value="F:metal ion binding"/>
    <property type="evidence" value="ECO:0007669"/>
    <property type="project" value="InterPro"/>
</dbReference>
<dbReference type="GO" id="GO:0044877">
    <property type="term" value="F:protein-containing complex binding"/>
    <property type="evidence" value="ECO:0000314"/>
    <property type="project" value="RGD"/>
</dbReference>
<dbReference type="GO" id="GO:0031625">
    <property type="term" value="F:ubiquitin protein ligase binding"/>
    <property type="evidence" value="ECO:0000266"/>
    <property type="project" value="RGD"/>
</dbReference>
<dbReference type="GO" id="GO:0006122">
    <property type="term" value="P:mitochondrial electron transport, ubiquinol to cytochrome c"/>
    <property type="evidence" value="ECO:0000266"/>
    <property type="project" value="RGD"/>
</dbReference>
<dbReference type="GO" id="GO:0014823">
    <property type="term" value="P:response to activity"/>
    <property type="evidence" value="ECO:0000270"/>
    <property type="project" value="RGD"/>
</dbReference>
<dbReference type="GO" id="GO:0043279">
    <property type="term" value="P:response to alkaloid"/>
    <property type="evidence" value="ECO:0000270"/>
    <property type="project" value="RGD"/>
</dbReference>
<dbReference type="FunFam" id="3.30.830.10:FF:000016">
    <property type="entry name" value="Cytochrome b-c1 complex subunit 1, mitochondrial"/>
    <property type="match status" value="1"/>
</dbReference>
<dbReference type="FunFam" id="3.30.830.10:FF:000001">
    <property type="entry name" value="Mitochondrial-processing peptidase subunit beta, mitochondrial"/>
    <property type="match status" value="1"/>
</dbReference>
<dbReference type="Gene3D" id="3.30.830.10">
    <property type="entry name" value="Metalloenzyme, LuxS/M16 peptidase-like"/>
    <property type="match status" value="2"/>
</dbReference>
<dbReference type="InterPro" id="IPR011249">
    <property type="entry name" value="Metalloenz_LuxS/M16"/>
</dbReference>
<dbReference type="InterPro" id="IPR050361">
    <property type="entry name" value="MPP/UQCRC_Complex"/>
</dbReference>
<dbReference type="InterPro" id="IPR011765">
    <property type="entry name" value="Pept_M16_N"/>
</dbReference>
<dbReference type="InterPro" id="IPR007863">
    <property type="entry name" value="Peptidase_M16_C"/>
</dbReference>
<dbReference type="PANTHER" id="PTHR11851:SF116">
    <property type="entry name" value="CYTOCHROME B-C1 COMPLEX SUBUNIT 1, MITOCHONDRIAL"/>
    <property type="match status" value="1"/>
</dbReference>
<dbReference type="PANTHER" id="PTHR11851">
    <property type="entry name" value="METALLOPROTEASE"/>
    <property type="match status" value="1"/>
</dbReference>
<dbReference type="Pfam" id="PF00675">
    <property type="entry name" value="Peptidase_M16"/>
    <property type="match status" value="1"/>
</dbReference>
<dbReference type="Pfam" id="PF05193">
    <property type="entry name" value="Peptidase_M16_C"/>
    <property type="match status" value="1"/>
</dbReference>
<dbReference type="SUPFAM" id="SSF63411">
    <property type="entry name" value="LuxS/MPP-like metallohydrolase"/>
    <property type="match status" value="2"/>
</dbReference>
<comment type="function">
    <text evidence="2 3 4">Component of the ubiquinol-cytochrome c oxidoreductase, a multisubunit transmembrane complex that is part of the mitochondrial electron transport chain which drives oxidative phosphorylation. The respiratory chain contains 3 multisubunit complexes succinate dehydrogenase (complex II, CII), ubiquinol-cytochrome c oxidoreductase (cytochrome b-c1 complex, complex III, CIII) and cytochrome c oxidase (complex IV, CIV), that cooperate to transfer electrons derived from NADH and succinate to molecular oxygen, creating an electrochemical gradient over the inner membrane that drives transmembrane transport and the ATP synthase. The cytochrome b-c1 complex catalyzes electron transfer from ubiquinol to cytochrome c, linking this redox reaction to translocation of protons across the mitochondrial inner membrane, with protons being carried across the membrane as hydrogens on the quinol. In the process called Q cycle, 2 protons are consumed from the matrix, 4 protons are released into the intermembrane space and 2 electrons are passed to cytochrome c (By similarity). The 2 core subunits UQCRC1/QCR1 and UQCRC2/QCR2 are homologous to the 2 mitochondrial-processing peptidase (MPP) subunits beta-MPP and alpha-MPP respectively, and they seem to have preserved their MPP processing properties. May be involved in the in situ processing of UQCRFS1 into the mature Rieske protein and its mitochondrial targeting sequence (MTS)/subunit 9 when incorporated into complex III (By similarity). Seems to play an important role in the maintenance of proper mitochondrial function in nigral dopaminergic neurons (By similarity).</text>
</comment>
<comment type="subunit">
    <text evidence="3 4 5">Component of the ubiquinol-cytochrome c oxidoreductase (cytochrome b-c1 complex, complex III, CIII), a multisubunit enzyme composed of 11 subunits. The complex is composed of 3 respiratory subunits cytochrome b, cytochrome c1 and Rieske protein UQCRFS1, 2 core protein subunits UQCRC1/QCR1 and UQCRC2/QCR2, and 6 low-molecular weight protein subunits UQCRH/QCR6, UQCRB/QCR7, UQCRQ/QCR8, UQCR10/QCR9, UQCR11/QCR10 and subunit 9, the cleavage product of Rieske protein UQCRFS1 (By similarity). The complex exists as an obligatory dimer and forms supercomplexes (SCs) in the inner mitochondrial membrane with NADH-ubiquinone oxidoreductase (complex I, CI) and cytochrome c oxidase (complex IV, CIV), resulting in different assemblies (supercomplex SCI(1)III(2)IV(1) and megacomplex MCI(2)III(2)IV(2)) (By similarity). Interacts with UQCC6 (By similarity). Interacts with STMP1 (By similarity).</text>
</comment>
<comment type="subcellular location">
    <subcellularLocation>
        <location evidence="2">Mitochondrion inner membrane</location>
        <topology evidence="2">Peripheral membrane protein</topology>
        <orientation evidence="2">Matrix side</orientation>
    </subcellularLocation>
</comment>
<comment type="similarity">
    <text evidence="6">Belongs to the peptidase M16 family. UQCRC1/QCR1 subfamily.</text>
</comment>
<feature type="transit peptide" description="Mitochondrion" evidence="1">
    <location>
        <begin position="1"/>
        <end position="34"/>
    </location>
</feature>
<feature type="chain" id="PRO_0000271398" description="Cytochrome b-c1 complex subunit 1, mitochondrial">
    <location>
        <begin position="35"/>
        <end position="480"/>
    </location>
</feature>
<feature type="modified residue" description="N6-acetyllysine" evidence="4">
    <location>
        <position position="111"/>
    </location>
</feature>
<feature type="modified residue" description="N6-acetyllysine" evidence="5">
    <location>
        <position position="138"/>
    </location>
</feature>
<feature type="modified residue" description="N6-acetyllysine; alternate" evidence="5">
    <location>
        <position position="163"/>
    </location>
</feature>
<feature type="modified residue" description="N6-succinyllysine; alternate" evidence="5">
    <location>
        <position position="163"/>
    </location>
</feature>
<feature type="modified residue" description="Phosphoserine" evidence="7">
    <location>
        <position position="212"/>
    </location>
</feature>
<feature type="modified residue" description="Phosphothreonine" evidence="7">
    <location>
        <position position="214"/>
    </location>
</feature>